<name>LP9A_THEAU</name>
<comment type="function">
    <text evidence="2 3 6">Lytic polysaccharide monooxygenase (LPMO) that depolymerizes crystalline and amorphous polysaccharides via the oxidation of scissile alpha- or beta-(1-4)-glycosidic bonds, yielding C1 and C4 oxidation product (PubMed:21876164, PubMed:29971843, Ref.4). Catalysis by LPMOs requires the reduction of the active-site copper from Cu(II) to Cu(I) by a reducing agent and H(2)O(2) or O(2) as a cosubstrate (PubMed:21876164, PubMed:29971843, Ref.4). Is able to cleave cellulose and xylan to produce C1- and C4-oxidized products (Ref.4).</text>
</comment>
<comment type="catalytic activity">
    <reaction evidence="2 6">
        <text>[(1-&gt;4)-beta-D-glucosyl]n+m + reduced acceptor + O2 = 4-dehydro-beta-D-glucosyl-[(1-&gt;4)-beta-D-glucosyl]n-1 + [(1-&gt;4)-beta-D-glucosyl]m + acceptor + H2O.</text>
        <dbReference type="EC" id="1.14.99.56"/>
    </reaction>
</comment>
<comment type="cofactor">
    <cofactor evidence="2 3 4 5 6">
        <name>Cu(2+)</name>
        <dbReference type="ChEBI" id="CHEBI:29036"/>
    </cofactor>
    <text evidence="2 3 4 5 6">Binds 1 copper ion per subunit.</text>
</comment>
<comment type="activity regulation">
    <text evidence="3">Small amounts of H(2)O(2) boost LPMO activity, while higher amounts lead to inactivation of the enzyme.</text>
</comment>
<comment type="subcellular location">
    <subcellularLocation>
        <location evidence="9">Secreted</location>
    </subcellularLocation>
</comment>
<comment type="PTM">
    <text evidence="2 3">The catalytically essential N-terminal histidine His-22 is post-translationally modified by methylation to prevent protonation of the histidine side chain, and protect the critical active site of the enzyme from oxidative damage.</text>
</comment>
<comment type="biotechnology">
    <text evidence="2">Lignocellulose is the most abundant polymeric composite on Earth and is a recalcitrant but promising renewable substrate for industrial biotechnology applications. Together with cellobiose dehydrogenases (CDHs) an enzymatic system capable of oxidative cellulose cleavage is formed, which increases the efficiency of cellulases and put LPMOs at focus of biofuel research.</text>
</comment>
<comment type="similarity">
    <text evidence="8">Belongs to the polysaccharide monooxygenase AA9 family.</text>
</comment>
<sequence>HGFVQNIVIDGKNYGGYLVNQYPYMSNPPEVIAWSTTATDLGFVDGTGYQTPDIICHRGAKPGALTAPVSPGGTVELQWTPWPDSHHGPVINYLAPCNGDCSTVDKTQLEFFKIAESGLINDDNPPGIWASDNLIAANNSWTVTIPTTIAPGNYVLRHEIIALHSAQNQDGAQNYPQCINLQVTGGGSDNPAGTLGTALYHDTDPGILINIYQKLSSYIIPGPPLYTG</sequence>
<evidence type="ECO:0000250" key="1">
    <source>
        <dbReference type="UniProtKB" id="Q1K8B6"/>
    </source>
</evidence>
<evidence type="ECO:0000269" key="2">
    <source>
    </source>
</evidence>
<evidence type="ECO:0000269" key="3">
    <source>
    </source>
</evidence>
<evidence type="ECO:0000269" key="4">
    <source>
    </source>
</evidence>
<evidence type="ECO:0000269" key="5">
    <source>
    </source>
</evidence>
<evidence type="ECO:0000269" key="6">
    <source ref="4"/>
</evidence>
<evidence type="ECO:0000303" key="7">
    <source>
    </source>
</evidence>
<evidence type="ECO:0000305" key="8"/>
<evidence type="ECO:0000305" key="9">
    <source>
    </source>
</evidence>
<evidence type="ECO:0007744" key="10">
    <source>
        <dbReference type="PDB" id="2YET"/>
    </source>
</evidence>
<evidence type="ECO:0007744" key="11">
    <source>
        <dbReference type="PDB" id="3ZUD"/>
    </source>
</evidence>
<evidence type="ECO:0007744" key="12">
    <source>
        <dbReference type="PDB" id="7PU1"/>
    </source>
</evidence>
<evidence type="ECO:0007744" key="13">
    <source>
        <dbReference type="PDB" id="7PZ3"/>
    </source>
</evidence>
<evidence type="ECO:0007744" key="14">
    <source>
        <dbReference type="PDB" id="7PZ4"/>
    </source>
</evidence>
<evidence type="ECO:0007744" key="15">
    <source>
        <dbReference type="PDB" id="7PZ5"/>
    </source>
</evidence>
<evidence type="ECO:0007744" key="16">
    <source>
        <dbReference type="PDB" id="7PZ6"/>
    </source>
</evidence>
<evidence type="ECO:0007744" key="17">
    <source>
        <dbReference type="PDB" id="7PZ7"/>
    </source>
</evidence>
<evidence type="ECO:0007744" key="18">
    <source>
        <dbReference type="PDB" id="7PZ8"/>
    </source>
</evidence>
<evidence type="ECO:0007744" key="19">
    <source>
        <dbReference type="PDB" id="7Q1K"/>
    </source>
</evidence>
<evidence type="ECO:0007829" key="20">
    <source>
        <dbReference type="PDB" id="3ZUD"/>
    </source>
</evidence>
<evidence type="ECO:0007829" key="21">
    <source>
        <dbReference type="PDB" id="7Q1K"/>
    </source>
</evidence>
<protein>
    <recommendedName>
        <fullName evidence="7">AA9 family lytic polysaccharide monooxygenase A</fullName>
        <shortName evidence="7">LPMO9A</shortName>
        <ecNumber evidence="2">1.14.99.56</ecNumber>
    </recommendedName>
    <alternativeName>
        <fullName evidence="8">Cellulase LPMO9A</fullName>
    </alternativeName>
    <alternativeName>
        <fullName evidence="8">Endo-beta-1,4-glucanase LPMO9A</fullName>
        <shortName evidence="8">Endoglucanase LPMO9A</shortName>
    </alternativeName>
    <alternativeName>
        <fullName evidence="8">Glycosyl hydrolase 61 family protein LPMO9A</fullName>
    </alternativeName>
</protein>
<organism>
    <name type="scientific">Thermoascus aurantiacus</name>
    <dbReference type="NCBI Taxonomy" id="5087"/>
    <lineage>
        <taxon>Eukaryota</taxon>
        <taxon>Fungi</taxon>
        <taxon>Dikarya</taxon>
        <taxon>Ascomycota</taxon>
        <taxon>Pezizomycotina</taxon>
        <taxon>Eurotiomycetes</taxon>
        <taxon>Eurotiomycetidae</taxon>
        <taxon>Eurotiales</taxon>
        <taxon>Thermoascaceae</taxon>
        <taxon>Thermoascus</taxon>
    </lineage>
</organism>
<accession>G3XAP7</accession>
<keyword id="KW-0002">3D-structure</keyword>
<keyword id="KW-0119">Carbohydrate metabolism</keyword>
<keyword id="KW-0136">Cellulose degradation</keyword>
<keyword id="KW-0186">Copper</keyword>
<keyword id="KW-1015">Disulfide bond</keyword>
<keyword id="KW-0325">Glycoprotein</keyword>
<keyword id="KW-0479">Metal-binding</keyword>
<keyword id="KW-0488">Methylation</keyword>
<keyword id="KW-0503">Monooxygenase</keyword>
<keyword id="KW-0560">Oxidoreductase</keyword>
<keyword id="KW-0624">Polysaccharide degradation</keyword>
<keyword id="KW-0964">Secreted</keyword>
<feature type="chain" id="PRO_0000459993" description="AA9 family lytic polysaccharide monooxygenase A">
    <location>
        <begin position="1" status="less than"/>
        <end position="228"/>
    </location>
</feature>
<feature type="binding site" evidence="2 4 5 6 10 11 12 13 14 15 16 17 18 19">
    <location>
        <position position="1"/>
    </location>
    <ligand>
        <name>Cu(2+)</name>
        <dbReference type="ChEBI" id="CHEBI:29036"/>
        <note>catalytic</note>
    </ligand>
</feature>
<feature type="binding site" evidence="2 4 5 6 10 11 12 13 14 15 16 17 18 19">
    <location>
        <position position="86"/>
    </location>
    <ligand>
        <name>Cu(2+)</name>
        <dbReference type="ChEBI" id="CHEBI:29036"/>
        <note>catalytic</note>
    </ligand>
</feature>
<feature type="binding site" evidence="1">
    <location>
        <position position="164"/>
    </location>
    <ligand>
        <name>O2</name>
        <dbReference type="ChEBI" id="CHEBI:15379"/>
    </ligand>
</feature>
<feature type="binding site" evidence="1">
    <location>
        <position position="173"/>
    </location>
    <ligand>
        <name>O2</name>
        <dbReference type="ChEBI" id="CHEBI:15379"/>
    </ligand>
</feature>
<feature type="binding site" evidence="1">
    <location>
        <position position="175"/>
    </location>
    <ligand>
        <name>Cu(2+)</name>
        <dbReference type="ChEBI" id="CHEBI:29036"/>
        <note>catalytic</note>
    </ligand>
</feature>
<feature type="modified residue" description="Methylhistidine" evidence="2 3">
    <location>
        <position position="1"/>
    </location>
</feature>
<feature type="glycosylation site" description="N-linked (GlcNAc...) asparagine" evidence="2 6 10 11 19">
    <location>
        <position position="138"/>
    </location>
</feature>
<feature type="disulfide bond" evidence="2 4 5 6 10 11 12 13 14 15 16 17 18 19">
    <location>
        <begin position="56"/>
        <end position="178"/>
    </location>
</feature>
<feature type="disulfide bond" evidence="2 4 5 6 10 11 12 13 14 15 16 17 18 19">
    <location>
        <begin position="97"/>
        <end position="101"/>
    </location>
</feature>
<feature type="non-terminal residue" evidence="8">
    <location>
        <position position="1"/>
    </location>
</feature>
<feature type="strand" evidence="20">
    <location>
        <begin position="4"/>
        <end position="9"/>
    </location>
</feature>
<feature type="strand" evidence="20">
    <location>
        <begin position="12"/>
        <end position="15"/>
    </location>
</feature>
<feature type="turn" evidence="20">
    <location>
        <begin position="19"/>
        <end position="21"/>
    </location>
</feature>
<feature type="helix" evidence="20">
    <location>
        <begin position="22"/>
        <end position="24"/>
    </location>
</feature>
<feature type="strand" evidence="21">
    <location>
        <begin position="25"/>
        <end position="27"/>
    </location>
</feature>
<feature type="helix" evidence="20">
    <location>
        <begin position="46"/>
        <end position="48"/>
    </location>
</feature>
<feature type="helix" evidence="20">
    <location>
        <begin position="53"/>
        <end position="56"/>
    </location>
</feature>
<feature type="strand" evidence="20">
    <location>
        <begin position="67"/>
        <end position="69"/>
    </location>
</feature>
<feature type="strand" evidence="20">
    <location>
        <begin position="74"/>
        <end position="80"/>
    </location>
</feature>
<feature type="strand" evidence="20">
    <location>
        <begin position="90"/>
        <end position="96"/>
    </location>
</feature>
<feature type="helix" evidence="20">
    <location>
        <begin position="101"/>
        <end position="103"/>
    </location>
</feature>
<feature type="helix" evidence="20">
    <location>
        <begin position="106"/>
        <end position="108"/>
    </location>
</feature>
<feature type="strand" evidence="20">
    <location>
        <begin position="110"/>
        <end position="117"/>
    </location>
</feature>
<feature type="strand" evidence="20">
    <location>
        <begin position="119"/>
        <end position="121"/>
    </location>
</feature>
<feature type="helix" evidence="20">
    <location>
        <begin position="130"/>
        <end position="136"/>
    </location>
</feature>
<feature type="strand" evidence="20">
    <location>
        <begin position="139"/>
        <end position="144"/>
    </location>
</feature>
<feature type="strand" evidence="20">
    <location>
        <begin position="147"/>
        <end position="149"/>
    </location>
</feature>
<feature type="strand" evidence="20">
    <location>
        <begin position="152"/>
        <end position="162"/>
    </location>
</feature>
<feature type="turn" evidence="20">
    <location>
        <begin position="164"/>
        <end position="167"/>
    </location>
</feature>
<feature type="strand" evidence="20">
    <location>
        <begin position="173"/>
        <end position="183"/>
    </location>
</feature>
<feature type="helix" evidence="20">
    <location>
        <begin position="196"/>
        <end position="198"/>
    </location>
</feature>
<feature type="turn" evidence="20">
    <location>
        <begin position="205"/>
        <end position="207"/>
    </location>
</feature>
<proteinExistence type="evidence at protein level"/>
<gene>
    <name evidence="7" type="primary">LPMO9A</name>
</gene>
<dbReference type="EC" id="1.14.99.56" evidence="2"/>
<dbReference type="PDB" id="2YET">
    <property type="method" value="X-ray"/>
    <property type="resolution" value="1.50 A"/>
    <property type="chains" value="A/B=1-228"/>
</dbReference>
<dbReference type="PDB" id="3ZUD">
    <property type="method" value="X-ray"/>
    <property type="resolution" value="1.25 A"/>
    <property type="chains" value="A=1-228"/>
</dbReference>
<dbReference type="PDB" id="7PU1">
    <property type="method" value="X-ray"/>
    <property type="resolution" value="1.06 A"/>
    <property type="chains" value="AAA/BBB=1-228"/>
</dbReference>
<dbReference type="PDB" id="7PZ3">
    <property type="method" value="X-ray"/>
    <property type="resolution" value="1.90 A"/>
    <property type="chains" value="A=1-228"/>
</dbReference>
<dbReference type="PDB" id="7PZ4">
    <property type="method" value="X-ray"/>
    <property type="resolution" value="1.85 A"/>
    <property type="chains" value="A=1-228"/>
</dbReference>
<dbReference type="PDB" id="7PZ5">
    <property type="method" value="X-ray"/>
    <property type="resolution" value="1.45 A"/>
    <property type="chains" value="A=1-228"/>
</dbReference>
<dbReference type="PDB" id="7PZ6">
    <property type="method" value="X-ray"/>
    <property type="resolution" value="1.45 A"/>
    <property type="chains" value="A=1-228"/>
</dbReference>
<dbReference type="PDB" id="7PZ7">
    <property type="method" value="X-ray"/>
    <property type="resolution" value="1.80 A"/>
    <property type="chains" value="A=1-228"/>
</dbReference>
<dbReference type="PDB" id="7PZ8">
    <property type="method" value="X-ray"/>
    <property type="resolution" value="1.40 A"/>
    <property type="chains" value="A=1-228"/>
</dbReference>
<dbReference type="PDB" id="7Q1K">
    <property type="method" value="X-ray"/>
    <property type="resolution" value="1.36 A"/>
    <property type="chains" value="A=1-228"/>
</dbReference>
<dbReference type="PDB" id="8B4G">
    <property type="method" value="X-ray"/>
    <property type="resolution" value="1.50 A"/>
    <property type="chains" value="AAA=1-228"/>
</dbReference>
<dbReference type="PDBsum" id="2YET"/>
<dbReference type="PDBsum" id="3ZUD"/>
<dbReference type="PDBsum" id="7PU1"/>
<dbReference type="PDBsum" id="7PZ3"/>
<dbReference type="PDBsum" id="7PZ4"/>
<dbReference type="PDBsum" id="7PZ5"/>
<dbReference type="PDBsum" id="7PZ6"/>
<dbReference type="PDBsum" id="7PZ7"/>
<dbReference type="PDBsum" id="7PZ8"/>
<dbReference type="PDBsum" id="7Q1K"/>
<dbReference type="PDBsum" id="8B4G"/>
<dbReference type="SMR" id="G3XAP7"/>
<dbReference type="BRENDA" id="1.14.99.54">
    <property type="organism ID" value="6294"/>
</dbReference>
<dbReference type="BRENDA" id="1.14.99.56">
    <property type="organism ID" value="6294"/>
</dbReference>
<dbReference type="EvolutionaryTrace" id="G3XAP7"/>
<dbReference type="GO" id="GO:0005576">
    <property type="term" value="C:extracellular region"/>
    <property type="evidence" value="ECO:0007669"/>
    <property type="project" value="UniProtKB-SubCell"/>
</dbReference>
<dbReference type="GO" id="GO:0008810">
    <property type="term" value="F:cellulase activity"/>
    <property type="evidence" value="ECO:0007669"/>
    <property type="project" value="UniProtKB-EC"/>
</dbReference>
<dbReference type="GO" id="GO:0046872">
    <property type="term" value="F:metal ion binding"/>
    <property type="evidence" value="ECO:0007669"/>
    <property type="project" value="UniProtKB-KW"/>
</dbReference>
<dbReference type="GO" id="GO:0004497">
    <property type="term" value="F:monooxygenase activity"/>
    <property type="evidence" value="ECO:0007669"/>
    <property type="project" value="UniProtKB-KW"/>
</dbReference>
<dbReference type="GO" id="GO:0030245">
    <property type="term" value="P:cellulose catabolic process"/>
    <property type="evidence" value="ECO:0007669"/>
    <property type="project" value="UniProtKB-KW"/>
</dbReference>
<dbReference type="CDD" id="cd21175">
    <property type="entry name" value="LPMO_AA9"/>
    <property type="match status" value="1"/>
</dbReference>
<dbReference type="Gene3D" id="2.70.50.70">
    <property type="match status" value="1"/>
</dbReference>
<dbReference type="InterPro" id="IPR049892">
    <property type="entry name" value="AA9"/>
</dbReference>
<dbReference type="InterPro" id="IPR005103">
    <property type="entry name" value="AA9_LPMO"/>
</dbReference>
<dbReference type="PANTHER" id="PTHR33353:SF34">
    <property type="entry name" value="ENDO-BETA-1,4-GLUCANASE D"/>
    <property type="match status" value="1"/>
</dbReference>
<dbReference type="PANTHER" id="PTHR33353">
    <property type="entry name" value="PUTATIVE (AFU_ORTHOLOGUE AFUA_1G12560)-RELATED"/>
    <property type="match status" value="1"/>
</dbReference>
<dbReference type="Pfam" id="PF03443">
    <property type="entry name" value="AA9"/>
    <property type="match status" value="1"/>
</dbReference>
<reference key="1">
    <citation type="journal article" date="2018" name="Protein Sci.">
        <title>Methylation of the N-terminal histidine protects a lytic polysaccharide monooxygenase from auto-oxidative inactivation.</title>
        <authorList>
            <person name="Petrovic D.M."/>
            <person name="Bissaro B."/>
            <person name="Chylenski P."/>
            <person name="Skaugen M."/>
            <person name="Soerlie M."/>
            <person name="Jensen M.S."/>
            <person name="Aachmann F.L."/>
            <person name="Courtade G."/>
            <person name="Varnai A."/>
            <person name="Eijsink V.G.H."/>
        </authorList>
    </citation>
    <scope>FUNCTION</scope>
    <scope>CATALYTIC ACTIVITY</scope>
    <scope>METHYLATION AT HIS-1</scope>
    <scope>COFACTOR</scope>
    <scope>ACTIVITY REGULATION</scope>
</reference>
<reference evidence="10 11" key="2">
    <citation type="journal article" date="2011" name="Proc. Natl. Acad. Sci. U.S.A.">
        <title>Insights into the oxidative degradation of cellulose by a copper metalloenzyme that exploits biomass components.</title>
        <authorList>
            <person name="Quinlan R.J."/>
            <person name="Sweeney M.D."/>
            <person name="Lo Leggio L."/>
            <person name="Otten H."/>
            <person name="Poulsen J.C."/>
            <person name="Johansen K.S."/>
            <person name="Krogh K.B."/>
            <person name="Jorgensen C.I."/>
            <person name="Tovborg M."/>
            <person name="Anthonsen A."/>
            <person name="Tryfona T."/>
            <person name="Walter C.P."/>
            <person name="Dupree P."/>
            <person name="Xu F."/>
            <person name="Davies G.J."/>
            <person name="Walton P.H."/>
        </authorList>
    </citation>
    <scope>X-RAY CRYSTALLOGRAPHY (1.25 ANGSTROMS) IN COMPLEX WITH COPPER</scope>
    <scope>GLYCOSYLATION AT ASN-138</scope>
    <scope>DISULFIDE BONDS</scope>
    <scope>FUNCTION</scope>
    <scope>CATALYTIC ACTIVITY</scope>
    <scope>METHYLATION AT HIS-1</scope>
    <scope>BIOTECHNOLOGY</scope>
</reference>
<reference evidence="12" key="3">
    <citation type="journal article" date="2022" name="Biomolecules">
        <title>Protonation state of an important histidine from high resolution structures of lytic polysaccharide monooxygenases.</title>
        <authorList>
            <person name="Banerjee S."/>
            <person name="Muderspach S.J."/>
            <person name="Tandrup T."/>
            <person name="Frandsen K.E.H."/>
            <person name="Singh R.K."/>
            <person name="Ipsen J.O."/>
            <person name="Hernandez-Rollan C."/>
            <person name="Norholm M.H.H."/>
            <person name="Bjerrum M.J."/>
            <person name="Johansen K.S."/>
            <person name="Lo Leggio L."/>
        </authorList>
    </citation>
    <scope>X-RAY CRYSTALLOGRAPHY (1.06 ANGSTROMS) IN COMPLEX WITH COPPER</scope>
    <scope>DISULFIDE BONDS</scope>
</reference>
<reference evidence="19" key="4">
    <citation type="journal article" date="2022" name="Catalysts">
        <title>Purification and structural characterization of the auxiliary activity 9 native lytic polysaccharide monooxygenase from Thermoascus aurantiacus and identification of its C1- and C4-oxidized reaction products.</title>
        <authorList>
            <person name="Yu W."/>
            <person name="Mohsin I."/>
            <person name="Papageorgiou A.C."/>
            <person name="Li D."/>
        </authorList>
    </citation>
    <scope>X-RAY CRYSTALLOGRAPHY (1.36 ANGSTROMS) IN COMPLEX WITH COPPER</scope>
    <scope>DISULFIDE BONDS</scope>
    <scope>GLYCOSYLATION AT ASN-138</scope>
    <scope>FUNCTION</scope>
    <scope>CATALYTIC ACTIVITY</scope>
</reference>
<reference evidence="13 14 15 16 17 18" key="5">
    <citation type="journal article" date="2022" name="IUCrJ">
        <title>Changes in active-site geometry on X-ray photoreduction of a lytic polysaccharide monooxygenase active-site copper and saccharide binding.</title>
        <authorList>
            <person name="Tandrup T."/>
            <person name="Muderspach S.J."/>
            <person name="Banerjee S."/>
            <person name="Santoni G."/>
            <person name="Ipsen J.O."/>
            <person name="Hernandez-Rollan C."/>
            <person name="Norholm M.H.H."/>
            <person name="Johansen K.S."/>
            <person name="Meilleur F."/>
            <person name="Lo Leggio L."/>
        </authorList>
    </citation>
    <scope>X-RAY CRYSTALLOGRAPHY (1.40 ANGSTROMS) IN COMPLEX WITH COPPER</scope>
    <scope>DISULFIDE BONDS</scope>
</reference>